<comment type="function">
    <text evidence="1">Catalyzes the isomerization between 2-isopropylmalate and 3-isopropylmalate, via the formation of 2-isopropylmaleate.</text>
</comment>
<comment type="catalytic activity">
    <reaction evidence="1">
        <text>(2R,3S)-3-isopropylmalate = (2S)-2-isopropylmalate</text>
        <dbReference type="Rhea" id="RHEA:32287"/>
        <dbReference type="ChEBI" id="CHEBI:1178"/>
        <dbReference type="ChEBI" id="CHEBI:35121"/>
        <dbReference type="EC" id="4.2.1.33"/>
    </reaction>
</comment>
<comment type="cofactor">
    <cofactor evidence="1">
        <name>[4Fe-4S] cluster</name>
        <dbReference type="ChEBI" id="CHEBI:49883"/>
    </cofactor>
    <text evidence="1">Binds 1 [4Fe-4S] cluster per subunit.</text>
</comment>
<comment type="pathway">
    <text evidence="1">Amino-acid biosynthesis; L-leucine biosynthesis; L-leucine from 3-methyl-2-oxobutanoate: step 2/4.</text>
</comment>
<comment type="subunit">
    <text evidence="1">Heterodimer of LeuC and LeuD.</text>
</comment>
<comment type="similarity">
    <text evidence="1">Belongs to the aconitase/IPM isomerase family. LeuC type 1 subfamily.</text>
</comment>
<sequence>MGKSLYQKLYDAHIVHKNKDDVPILYIDRHLLHEVTSPQAFEALRLRKRIVRQPNKTFATMDHNVPTTTKNINHSGSMAKEQLDRLTKNCKDFGITLFGLNHPYQGIVHVLAPEQGITLPGMTIVCGDSHTATHGAFGALAFGIGTSEIEHVLATQTLQQIRYKSMQINLSGIIAPQITAKDIILAIIGKIGHGGGSGHVVEFCGPIITLLSMEERMTLCNMAIEMGATSALIAPDRTTYDYLKNRKFSPTGKNWEQALLYWKTLYSDHDAHFDKKFDFDVSNVNPQVTWGTNPSQVISIDQPIPSLESFIDPIERNSAERALIYMKLQSNTYLTDVSIDKVFIGSCTNSRIEDLRVAAQTIKGHHISKNTQAIVVPGSKLVKNQAEKEGLNKIFIQAGFEWRLPGCSMCLAMNNDRLEPGERCASTSNRNFEGRQGRGSRTHLVSPAMAAAAAIAGRFVDIRKFK</sequence>
<evidence type="ECO:0000255" key="1">
    <source>
        <dbReference type="HAMAP-Rule" id="MF_01026"/>
    </source>
</evidence>
<keyword id="KW-0004">4Fe-4S</keyword>
<keyword id="KW-0028">Amino-acid biosynthesis</keyword>
<keyword id="KW-0100">Branched-chain amino acid biosynthesis</keyword>
<keyword id="KW-0408">Iron</keyword>
<keyword id="KW-0411">Iron-sulfur</keyword>
<keyword id="KW-0432">Leucine biosynthesis</keyword>
<keyword id="KW-0456">Lyase</keyword>
<keyword id="KW-0479">Metal-binding</keyword>
<keyword id="KW-1185">Reference proteome</keyword>
<accession>Q493R2</accession>
<gene>
    <name evidence="1" type="primary">leuC</name>
    <name type="ordered locus">BPEN_135</name>
</gene>
<reference key="1">
    <citation type="journal article" date="2005" name="Genome Res.">
        <title>Genome sequence of Blochmannia pennsylvanicus indicates parallel evolutionary trends among bacterial mutualists of insects.</title>
        <authorList>
            <person name="Degnan P.H."/>
            <person name="Lazarus A.B."/>
            <person name="Wernegreen J.J."/>
        </authorList>
    </citation>
    <scope>NUCLEOTIDE SEQUENCE [LARGE SCALE GENOMIC DNA]</scope>
    <source>
        <strain>BPEN</strain>
    </source>
</reference>
<protein>
    <recommendedName>
        <fullName evidence="1">3-isopropylmalate dehydratase large subunit</fullName>
        <ecNumber evidence="1">4.2.1.33</ecNumber>
    </recommendedName>
    <alternativeName>
        <fullName evidence="1">Alpha-IPM isomerase</fullName>
        <shortName evidence="1">IPMI</shortName>
    </alternativeName>
    <alternativeName>
        <fullName evidence="1">Isopropylmalate isomerase</fullName>
    </alternativeName>
</protein>
<feature type="chain" id="PRO_0000076707" description="3-isopropylmalate dehydratase large subunit">
    <location>
        <begin position="1"/>
        <end position="466"/>
    </location>
</feature>
<feature type="binding site" evidence="1">
    <location>
        <position position="347"/>
    </location>
    <ligand>
        <name>[4Fe-4S] cluster</name>
        <dbReference type="ChEBI" id="CHEBI:49883"/>
    </ligand>
</feature>
<feature type="binding site" evidence="1">
    <location>
        <position position="407"/>
    </location>
    <ligand>
        <name>[4Fe-4S] cluster</name>
        <dbReference type="ChEBI" id="CHEBI:49883"/>
    </ligand>
</feature>
<feature type="binding site" evidence="1">
    <location>
        <position position="410"/>
    </location>
    <ligand>
        <name>[4Fe-4S] cluster</name>
        <dbReference type="ChEBI" id="CHEBI:49883"/>
    </ligand>
</feature>
<dbReference type="EC" id="4.2.1.33" evidence="1"/>
<dbReference type="EMBL" id="CP000016">
    <property type="protein sequence ID" value="AAZ40775.1"/>
    <property type="molecule type" value="Genomic_DNA"/>
</dbReference>
<dbReference type="RefSeq" id="WP_011282682.1">
    <property type="nucleotide sequence ID" value="NC_007292.1"/>
</dbReference>
<dbReference type="SMR" id="Q493R2"/>
<dbReference type="STRING" id="291272.BPEN_135"/>
<dbReference type="KEGG" id="bpn:BPEN_135"/>
<dbReference type="eggNOG" id="COG0065">
    <property type="taxonomic scope" value="Bacteria"/>
</dbReference>
<dbReference type="HOGENOM" id="CLU_006714_3_4_6"/>
<dbReference type="OrthoDB" id="9802769at2"/>
<dbReference type="UniPathway" id="UPA00048">
    <property type="reaction ID" value="UER00071"/>
</dbReference>
<dbReference type="Proteomes" id="UP000007794">
    <property type="component" value="Chromosome"/>
</dbReference>
<dbReference type="GO" id="GO:0003861">
    <property type="term" value="F:3-isopropylmalate dehydratase activity"/>
    <property type="evidence" value="ECO:0007669"/>
    <property type="project" value="UniProtKB-UniRule"/>
</dbReference>
<dbReference type="GO" id="GO:0051539">
    <property type="term" value="F:4 iron, 4 sulfur cluster binding"/>
    <property type="evidence" value="ECO:0007669"/>
    <property type="project" value="UniProtKB-KW"/>
</dbReference>
<dbReference type="GO" id="GO:0046872">
    <property type="term" value="F:metal ion binding"/>
    <property type="evidence" value="ECO:0007669"/>
    <property type="project" value="UniProtKB-KW"/>
</dbReference>
<dbReference type="GO" id="GO:0009098">
    <property type="term" value="P:L-leucine biosynthetic process"/>
    <property type="evidence" value="ECO:0007669"/>
    <property type="project" value="UniProtKB-UniRule"/>
</dbReference>
<dbReference type="CDD" id="cd01583">
    <property type="entry name" value="IPMI"/>
    <property type="match status" value="1"/>
</dbReference>
<dbReference type="FunFam" id="3.30.499.10:FF:000007">
    <property type="entry name" value="3-isopropylmalate dehydratase large subunit"/>
    <property type="match status" value="1"/>
</dbReference>
<dbReference type="Gene3D" id="3.30.499.10">
    <property type="entry name" value="Aconitase, domain 3"/>
    <property type="match status" value="2"/>
</dbReference>
<dbReference type="HAMAP" id="MF_01026">
    <property type="entry name" value="LeuC_type1"/>
    <property type="match status" value="1"/>
</dbReference>
<dbReference type="InterPro" id="IPR004430">
    <property type="entry name" value="3-IsopropMal_deHydase_lsu"/>
</dbReference>
<dbReference type="InterPro" id="IPR015931">
    <property type="entry name" value="Acnase/IPM_dHydase_lsu_aba_1/3"/>
</dbReference>
<dbReference type="InterPro" id="IPR001030">
    <property type="entry name" value="Acoase/IPM_deHydtase_lsu_aba"/>
</dbReference>
<dbReference type="InterPro" id="IPR018136">
    <property type="entry name" value="Aconitase_4Fe-4S_BS"/>
</dbReference>
<dbReference type="InterPro" id="IPR036008">
    <property type="entry name" value="Aconitase_4Fe-4S_dom"/>
</dbReference>
<dbReference type="InterPro" id="IPR050067">
    <property type="entry name" value="IPM_dehydratase_rel_enz"/>
</dbReference>
<dbReference type="InterPro" id="IPR033941">
    <property type="entry name" value="IPMI_cat"/>
</dbReference>
<dbReference type="NCBIfam" id="TIGR00170">
    <property type="entry name" value="leuC"/>
    <property type="match status" value="1"/>
</dbReference>
<dbReference type="NCBIfam" id="NF004016">
    <property type="entry name" value="PRK05478.1"/>
    <property type="match status" value="1"/>
</dbReference>
<dbReference type="NCBIfam" id="NF009116">
    <property type="entry name" value="PRK12466.1"/>
    <property type="match status" value="1"/>
</dbReference>
<dbReference type="PANTHER" id="PTHR43822:SF9">
    <property type="entry name" value="3-ISOPROPYLMALATE DEHYDRATASE"/>
    <property type="match status" value="1"/>
</dbReference>
<dbReference type="PANTHER" id="PTHR43822">
    <property type="entry name" value="HOMOACONITASE, MITOCHONDRIAL-RELATED"/>
    <property type="match status" value="1"/>
</dbReference>
<dbReference type="Pfam" id="PF00330">
    <property type="entry name" value="Aconitase"/>
    <property type="match status" value="1"/>
</dbReference>
<dbReference type="PRINTS" id="PR00415">
    <property type="entry name" value="ACONITASE"/>
</dbReference>
<dbReference type="SUPFAM" id="SSF53732">
    <property type="entry name" value="Aconitase iron-sulfur domain"/>
    <property type="match status" value="1"/>
</dbReference>
<dbReference type="PROSITE" id="PS00450">
    <property type="entry name" value="ACONITASE_1"/>
    <property type="match status" value="1"/>
</dbReference>
<dbReference type="PROSITE" id="PS01244">
    <property type="entry name" value="ACONITASE_2"/>
    <property type="match status" value="1"/>
</dbReference>
<name>LEUC_BLOPB</name>
<organism>
    <name type="scientific">Blochmanniella pennsylvanica (strain BPEN)</name>
    <dbReference type="NCBI Taxonomy" id="291272"/>
    <lineage>
        <taxon>Bacteria</taxon>
        <taxon>Pseudomonadati</taxon>
        <taxon>Pseudomonadota</taxon>
        <taxon>Gammaproteobacteria</taxon>
        <taxon>Enterobacterales</taxon>
        <taxon>Enterobacteriaceae</taxon>
        <taxon>ant endosymbionts</taxon>
        <taxon>Candidatus Blochmanniella</taxon>
    </lineage>
</organism>
<proteinExistence type="inferred from homology"/>